<accession>Q255U1</accession>
<name>SYC_CHLFF</name>
<dbReference type="EC" id="6.1.1.16" evidence="1"/>
<dbReference type="EMBL" id="AP006861">
    <property type="protein sequence ID" value="BAE80947.1"/>
    <property type="molecule type" value="Genomic_DNA"/>
</dbReference>
<dbReference type="RefSeq" id="WP_011457732.1">
    <property type="nucleotide sequence ID" value="NC_007899.1"/>
</dbReference>
<dbReference type="SMR" id="Q255U1"/>
<dbReference type="STRING" id="264202.CF0175"/>
<dbReference type="KEGG" id="cfe:CF0175"/>
<dbReference type="eggNOG" id="COG0215">
    <property type="taxonomic scope" value="Bacteria"/>
</dbReference>
<dbReference type="HOGENOM" id="CLU_013528_0_1_0"/>
<dbReference type="OrthoDB" id="9815130at2"/>
<dbReference type="Proteomes" id="UP000001260">
    <property type="component" value="Chromosome"/>
</dbReference>
<dbReference type="GO" id="GO:0005829">
    <property type="term" value="C:cytosol"/>
    <property type="evidence" value="ECO:0007669"/>
    <property type="project" value="TreeGrafter"/>
</dbReference>
<dbReference type="GO" id="GO:0005524">
    <property type="term" value="F:ATP binding"/>
    <property type="evidence" value="ECO:0007669"/>
    <property type="project" value="UniProtKB-UniRule"/>
</dbReference>
<dbReference type="GO" id="GO:0004817">
    <property type="term" value="F:cysteine-tRNA ligase activity"/>
    <property type="evidence" value="ECO:0007669"/>
    <property type="project" value="UniProtKB-UniRule"/>
</dbReference>
<dbReference type="GO" id="GO:0008270">
    <property type="term" value="F:zinc ion binding"/>
    <property type="evidence" value="ECO:0007669"/>
    <property type="project" value="UniProtKB-UniRule"/>
</dbReference>
<dbReference type="GO" id="GO:0006423">
    <property type="term" value="P:cysteinyl-tRNA aminoacylation"/>
    <property type="evidence" value="ECO:0007669"/>
    <property type="project" value="UniProtKB-UniRule"/>
</dbReference>
<dbReference type="CDD" id="cd00672">
    <property type="entry name" value="CysRS_core"/>
    <property type="match status" value="1"/>
</dbReference>
<dbReference type="FunFam" id="3.40.50.620:FF:000130">
    <property type="entry name" value="Cysteine--tRNA ligase"/>
    <property type="match status" value="1"/>
</dbReference>
<dbReference type="Gene3D" id="1.20.120.1910">
    <property type="entry name" value="Cysteine-tRNA ligase, C-terminal anti-codon recognition domain"/>
    <property type="match status" value="1"/>
</dbReference>
<dbReference type="Gene3D" id="3.40.50.620">
    <property type="entry name" value="HUPs"/>
    <property type="match status" value="1"/>
</dbReference>
<dbReference type="HAMAP" id="MF_00041">
    <property type="entry name" value="Cys_tRNA_synth"/>
    <property type="match status" value="1"/>
</dbReference>
<dbReference type="InterPro" id="IPR015803">
    <property type="entry name" value="Cys-tRNA-ligase"/>
</dbReference>
<dbReference type="InterPro" id="IPR015273">
    <property type="entry name" value="Cys-tRNA-synt_Ia_DALR"/>
</dbReference>
<dbReference type="InterPro" id="IPR024909">
    <property type="entry name" value="Cys-tRNA/MSH_ligase"/>
</dbReference>
<dbReference type="InterPro" id="IPR056411">
    <property type="entry name" value="CysS_C"/>
</dbReference>
<dbReference type="InterPro" id="IPR014729">
    <property type="entry name" value="Rossmann-like_a/b/a_fold"/>
</dbReference>
<dbReference type="InterPro" id="IPR032678">
    <property type="entry name" value="tRNA-synt_1_cat_dom"/>
</dbReference>
<dbReference type="InterPro" id="IPR009080">
    <property type="entry name" value="tRNAsynth_Ia_anticodon-bd"/>
</dbReference>
<dbReference type="NCBIfam" id="TIGR00435">
    <property type="entry name" value="cysS"/>
    <property type="match status" value="1"/>
</dbReference>
<dbReference type="PANTHER" id="PTHR10890:SF3">
    <property type="entry name" value="CYSTEINE--TRNA LIGASE, CYTOPLASMIC"/>
    <property type="match status" value="1"/>
</dbReference>
<dbReference type="PANTHER" id="PTHR10890">
    <property type="entry name" value="CYSTEINYL-TRNA SYNTHETASE"/>
    <property type="match status" value="1"/>
</dbReference>
<dbReference type="Pfam" id="PF23493">
    <property type="entry name" value="CysS_C"/>
    <property type="match status" value="1"/>
</dbReference>
<dbReference type="Pfam" id="PF09190">
    <property type="entry name" value="DALR_2"/>
    <property type="match status" value="1"/>
</dbReference>
<dbReference type="Pfam" id="PF01406">
    <property type="entry name" value="tRNA-synt_1e"/>
    <property type="match status" value="1"/>
</dbReference>
<dbReference type="PRINTS" id="PR00983">
    <property type="entry name" value="TRNASYNTHCYS"/>
</dbReference>
<dbReference type="SMART" id="SM00840">
    <property type="entry name" value="DALR_2"/>
    <property type="match status" value="1"/>
</dbReference>
<dbReference type="SUPFAM" id="SSF47323">
    <property type="entry name" value="Anticodon-binding domain of a subclass of class I aminoacyl-tRNA synthetases"/>
    <property type="match status" value="1"/>
</dbReference>
<dbReference type="SUPFAM" id="SSF52374">
    <property type="entry name" value="Nucleotidylyl transferase"/>
    <property type="match status" value="1"/>
</dbReference>
<reference key="1">
    <citation type="journal article" date="2006" name="DNA Res.">
        <title>Genome sequence of the cat pathogen, Chlamydophila felis.</title>
        <authorList>
            <person name="Azuma Y."/>
            <person name="Hirakawa H."/>
            <person name="Yamashita A."/>
            <person name="Cai Y."/>
            <person name="Rahman M.A."/>
            <person name="Suzuki H."/>
            <person name="Mitaku S."/>
            <person name="Toh H."/>
            <person name="Goto S."/>
            <person name="Murakami T."/>
            <person name="Sugi K."/>
            <person name="Hayashi H."/>
            <person name="Fukushi H."/>
            <person name="Hattori M."/>
            <person name="Kuhara S."/>
            <person name="Shirai M."/>
        </authorList>
    </citation>
    <scope>NUCLEOTIDE SEQUENCE [LARGE SCALE GENOMIC DNA]</scope>
    <source>
        <strain>Fe/C-56</strain>
    </source>
</reference>
<protein>
    <recommendedName>
        <fullName evidence="1">Cysteine--tRNA ligase</fullName>
        <ecNumber evidence="1">6.1.1.16</ecNumber>
    </recommendedName>
    <alternativeName>
        <fullName evidence="1">Cysteinyl-tRNA synthetase</fullName>
        <shortName evidence="1">CysRS</shortName>
    </alternativeName>
</protein>
<evidence type="ECO:0000255" key="1">
    <source>
        <dbReference type="HAMAP-Rule" id="MF_00041"/>
    </source>
</evidence>
<gene>
    <name evidence="1" type="primary">cysS</name>
    <name type="ordered locus">CF0175</name>
</gene>
<comment type="catalytic activity">
    <reaction evidence="1">
        <text>tRNA(Cys) + L-cysteine + ATP = L-cysteinyl-tRNA(Cys) + AMP + diphosphate</text>
        <dbReference type="Rhea" id="RHEA:17773"/>
        <dbReference type="Rhea" id="RHEA-COMP:9661"/>
        <dbReference type="Rhea" id="RHEA-COMP:9679"/>
        <dbReference type="ChEBI" id="CHEBI:30616"/>
        <dbReference type="ChEBI" id="CHEBI:33019"/>
        <dbReference type="ChEBI" id="CHEBI:35235"/>
        <dbReference type="ChEBI" id="CHEBI:78442"/>
        <dbReference type="ChEBI" id="CHEBI:78517"/>
        <dbReference type="ChEBI" id="CHEBI:456215"/>
        <dbReference type="EC" id="6.1.1.16"/>
    </reaction>
</comment>
<comment type="cofactor">
    <cofactor evidence="1">
        <name>Zn(2+)</name>
        <dbReference type="ChEBI" id="CHEBI:29105"/>
    </cofactor>
    <text evidence="1">Binds 1 zinc ion per subunit.</text>
</comment>
<comment type="subunit">
    <text evidence="1">Monomer.</text>
</comment>
<comment type="subcellular location">
    <subcellularLocation>
        <location evidence="1">Cytoplasm</location>
    </subcellularLocation>
</comment>
<comment type="similarity">
    <text evidence="1">Belongs to the class-I aminoacyl-tRNA synthetase family.</text>
</comment>
<sequence length="476" mass="54591">MRQSSENSQNLYLYNTATRTKELFSASNAPVKLYTCGPTVYDYAHIGNFRTYVFEDLLKRTLLFFGYSVKHIMNITDVDDKTLAGACRKNISLEEYTAPFIQAFFEDIAELNILPADVYPHATHYIPQMIKAIQKLLDENIAYIGQDSSVYFSIKKFPTYGKLSQLKLQDLQCCSRVTSDEYDKENLSDFVLWKAYDEQRDGHIYWESPFGKGRPGWHLECSIMAMELLGSSIDIHAGGVDNIFPHHENEIAQSESLSHKPFSRYWLHSEHLLVDGKKMSKSLGNFFTLRNLLDRGFSGEEIRYLLLQSHYRMQLNFTEEGLLACRQALKRLRDFISRLENPYPESTTISDEIDQQGKTFLKAFSDSIANDLNIAAALAALFDFIHQTNSFIDKSKFTQADANYILDLLKKINTVLGILQFSATQEIPDEVMQLVEKREVARREKNWAQADAFRDQVASLGYLIEDSKSGPKVKKL</sequence>
<organism>
    <name type="scientific">Chlamydia felis (strain Fe/C-56)</name>
    <name type="common">Chlamydophila felis</name>
    <dbReference type="NCBI Taxonomy" id="264202"/>
    <lineage>
        <taxon>Bacteria</taxon>
        <taxon>Pseudomonadati</taxon>
        <taxon>Chlamydiota</taxon>
        <taxon>Chlamydiia</taxon>
        <taxon>Chlamydiales</taxon>
        <taxon>Chlamydiaceae</taxon>
        <taxon>Chlamydia/Chlamydophila group</taxon>
        <taxon>Chlamydia</taxon>
    </lineage>
</organism>
<feature type="chain" id="PRO_0000240902" description="Cysteine--tRNA ligase">
    <location>
        <begin position="1"/>
        <end position="476"/>
    </location>
</feature>
<feature type="short sequence motif" description="'HIGH' region">
    <location>
        <begin position="38"/>
        <end position="48"/>
    </location>
</feature>
<feature type="short sequence motif" description="'KMSKS' region">
    <location>
        <begin position="278"/>
        <end position="282"/>
    </location>
</feature>
<feature type="binding site" evidence="1">
    <location>
        <position position="36"/>
    </location>
    <ligand>
        <name>Zn(2+)</name>
        <dbReference type="ChEBI" id="CHEBI:29105"/>
    </ligand>
</feature>
<feature type="binding site" evidence="1">
    <location>
        <position position="221"/>
    </location>
    <ligand>
        <name>Zn(2+)</name>
        <dbReference type="ChEBI" id="CHEBI:29105"/>
    </ligand>
</feature>
<feature type="binding site" evidence="1">
    <location>
        <position position="246"/>
    </location>
    <ligand>
        <name>Zn(2+)</name>
        <dbReference type="ChEBI" id="CHEBI:29105"/>
    </ligand>
</feature>
<feature type="binding site" evidence="1">
    <location>
        <position position="250"/>
    </location>
    <ligand>
        <name>Zn(2+)</name>
        <dbReference type="ChEBI" id="CHEBI:29105"/>
    </ligand>
</feature>
<feature type="binding site" evidence="1">
    <location>
        <position position="281"/>
    </location>
    <ligand>
        <name>ATP</name>
        <dbReference type="ChEBI" id="CHEBI:30616"/>
    </ligand>
</feature>
<proteinExistence type="inferred from homology"/>
<keyword id="KW-0030">Aminoacyl-tRNA synthetase</keyword>
<keyword id="KW-0067">ATP-binding</keyword>
<keyword id="KW-0963">Cytoplasm</keyword>
<keyword id="KW-0436">Ligase</keyword>
<keyword id="KW-0479">Metal-binding</keyword>
<keyword id="KW-0547">Nucleotide-binding</keyword>
<keyword id="KW-0648">Protein biosynthesis</keyword>
<keyword id="KW-0862">Zinc</keyword>